<feature type="chain" id="PRO_0000297389" description="3-methyl-2-oxobutanoate hydroxymethyltransferase">
    <location>
        <begin position="1"/>
        <end position="271"/>
    </location>
</feature>
<feature type="active site" description="Proton acceptor" evidence="1">
    <location>
        <position position="185"/>
    </location>
</feature>
<feature type="binding site" evidence="1">
    <location>
        <begin position="42"/>
        <end position="43"/>
    </location>
    <ligand>
        <name>3-methyl-2-oxobutanoate</name>
        <dbReference type="ChEBI" id="CHEBI:11851"/>
    </ligand>
</feature>
<feature type="binding site" evidence="1">
    <location>
        <position position="42"/>
    </location>
    <ligand>
        <name>Mg(2+)</name>
        <dbReference type="ChEBI" id="CHEBI:18420"/>
    </ligand>
</feature>
<feature type="binding site" evidence="1">
    <location>
        <position position="86"/>
    </location>
    <ligand>
        <name>3-methyl-2-oxobutanoate</name>
        <dbReference type="ChEBI" id="CHEBI:11851"/>
    </ligand>
</feature>
<feature type="binding site" evidence="1">
    <location>
        <position position="86"/>
    </location>
    <ligand>
        <name>Mg(2+)</name>
        <dbReference type="ChEBI" id="CHEBI:18420"/>
    </ligand>
</feature>
<feature type="binding site" evidence="1">
    <location>
        <position position="116"/>
    </location>
    <ligand>
        <name>3-methyl-2-oxobutanoate</name>
        <dbReference type="ChEBI" id="CHEBI:11851"/>
    </ligand>
</feature>
<feature type="binding site" evidence="1">
    <location>
        <position position="118"/>
    </location>
    <ligand>
        <name>Mg(2+)</name>
        <dbReference type="ChEBI" id="CHEBI:18420"/>
    </ligand>
</feature>
<comment type="function">
    <text evidence="1">Catalyzes the reversible reaction in which hydroxymethyl group from 5,10-methylenetetrahydrofolate is transferred onto alpha-ketoisovalerate to form ketopantoate.</text>
</comment>
<comment type="catalytic activity">
    <reaction evidence="1">
        <text>3-methyl-2-oxobutanoate + (6R)-5,10-methylene-5,6,7,8-tetrahydrofolate + H2O = 2-dehydropantoate + (6S)-5,6,7,8-tetrahydrofolate</text>
        <dbReference type="Rhea" id="RHEA:11824"/>
        <dbReference type="ChEBI" id="CHEBI:11561"/>
        <dbReference type="ChEBI" id="CHEBI:11851"/>
        <dbReference type="ChEBI" id="CHEBI:15377"/>
        <dbReference type="ChEBI" id="CHEBI:15636"/>
        <dbReference type="ChEBI" id="CHEBI:57453"/>
        <dbReference type="EC" id="2.1.2.11"/>
    </reaction>
</comment>
<comment type="cofactor">
    <cofactor evidence="1">
        <name>Mg(2+)</name>
        <dbReference type="ChEBI" id="CHEBI:18420"/>
    </cofactor>
    <text evidence="1">Binds 1 Mg(2+) ion per subunit.</text>
</comment>
<comment type="pathway">
    <text evidence="1">Cofactor biosynthesis; (R)-pantothenate biosynthesis; (R)-pantoate from 3-methyl-2-oxobutanoate: step 1/2.</text>
</comment>
<comment type="subunit">
    <text evidence="1">Homodecamer; pentamer of dimers.</text>
</comment>
<comment type="subcellular location">
    <subcellularLocation>
        <location evidence="1">Cytoplasm</location>
    </subcellularLocation>
</comment>
<comment type="similarity">
    <text evidence="1">Belongs to the PanB family.</text>
</comment>
<dbReference type="EC" id="2.1.2.11" evidence="1"/>
<dbReference type="EMBL" id="CP000110">
    <property type="protein sequence ID" value="ABB34613.1"/>
    <property type="molecule type" value="Genomic_DNA"/>
</dbReference>
<dbReference type="RefSeq" id="WP_011363838.1">
    <property type="nucleotide sequence ID" value="NC_007516.1"/>
</dbReference>
<dbReference type="SMR" id="Q3ALB9"/>
<dbReference type="STRING" id="110662.Syncc9605_0845"/>
<dbReference type="KEGG" id="syd:Syncc9605_0845"/>
<dbReference type="eggNOG" id="COG0413">
    <property type="taxonomic scope" value="Bacteria"/>
</dbReference>
<dbReference type="HOGENOM" id="CLU_036645_1_0_3"/>
<dbReference type="OrthoDB" id="9781789at2"/>
<dbReference type="UniPathway" id="UPA00028">
    <property type="reaction ID" value="UER00003"/>
</dbReference>
<dbReference type="GO" id="GO:0005737">
    <property type="term" value="C:cytoplasm"/>
    <property type="evidence" value="ECO:0007669"/>
    <property type="project" value="UniProtKB-SubCell"/>
</dbReference>
<dbReference type="GO" id="GO:0003864">
    <property type="term" value="F:3-methyl-2-oxobutanoate hydroxymethyltransferase activity"/>
    <property type="evidence" value="ECO:0007669"/>
    <property type="project" value="UniProtKB-UniRule"/>
</dbReference>
<dbReference type="GO" id="GO:0000287">
    <property type="term" value="F:magnesium ion binding"/>
    <property type="evidence" value="ECO:0007669"/>
    <property type="project" value="TreeGrafter"/>
</dbReference>
<dbReference type="GO" id="GO:0015940">
    <property type="term" value="P:pantothenate biosynthetic process"/>
    <property type="evidence" value="ECO:0007669"/>
    <property type="project" value="UniProtKB-UniRule"/>
</dbReference>
<dbReference type="CDD" id="cd06557">
    <property type="entry name" value="KPHMT-like"/>
    <property type="match status" value="1"/>
</dbReference>
<dbReference type="Gene3D" id="3.20.20.60">
    <property type="entry name" value="Phosphoenolpyruvate-binding domains"/>
    <property type="match status" value="1"/>
</dbReference>
<dbReference type="HAMAP" id="MF_00156">
    <property type="entry name" value="PanB"/>
    <property type="match status" value="1"/>
</dbReference>
<dbReference type="InterPro" id="IPR003700">
    <property type="entry name" value="Pantoate_hydroxy_MeTrfase"/>
</dbReference>
<dbReference type="InterPro" id="IPR015813">
    <property type="entry name" value="Pyrv/PenolPyrv_kinase-like_dom"/>
</dbReference>
<dbReference type="InterPro" id="IPR040442">
    <property type="entry name" value="Pyrv_kinase-like_dom_sf"/>
</dbReference>
<dbReference type="NCBIfam" id="TIGR00222">
    <property type="entry name" value="panB"/>
    <property type="match status" value="1"/>
</dbReference>
<dbReference type="NCBIfam" id="NF001452">
    <property type="entry name" value="PRK00311.1"/>
    <property type="match status" value="1"/>
</dbReference>
<dbReference type="PANTHER" id="PTHR20881">
    <property type="entry name" value="3-METHYL-2-OXOBUTANOATE HYDROXYMETHYLTRANSFERASE"/>
    <property type="match status" value="1"/>
</dbReference>
<dbReference type="PANTHER" id="PTHR20881:SF0">
    <property type="entry name" value="3-METHYL-2-OXOBUTANOATE HYDROXYMETHYLTRANSFERASE"/>
    <property type="match status" value="1"/>
</dbReference>
<dbReference type="Pfam" id="PF02548">
    <property type="entry name" value="Pantoate_transf"/>
    <property type="match status" value="1"/>
</dbReference>
<dbReference type="PIRSF" id="PIRSF000388">
    <property type="entry name" value="Pantoate_hydroxy_MeTrfase"/>
    <property type="match status" value="1"/>
</dbReference>
<dbReference type="SUPFAM" id="SSF51621">
    <property type="entry name" value="Phosphoenolpyruvate/pyruvate domain"/>
    <property type="match status" value="1"/>
</dbReference>
<sequence>MRPSDLTRFKQKGQPIAVLTAWDSLSAALAEAAGADVLLIGDSLAMVALGHATTLPVSLDQMLHHTQAVARGLTTMPADQPLLVCDLPFLSYQCGEDRAVAAAGRLLKESSAAAVKLEGAEPEVVAVIDRLVRMGIPVMGHLGLTPQAVHRLGYRRQATDAISQERLLEQACTLEQKGCFSLVLEHVPAELACRVQQALTIPVIGIGAGDDCDGQVRVTADLLGLTAKQPPFSPALVDGRRLFIDALKGWVNQTRNHTPPTNGRITQADRT</sequence>
<keyword id="KW-0963">Cytoplasm</keyword>
<keyword id="KW-0460">Magnesium</keyword>
<keyword id="KW-0479">Metal-binding</keyword>
<keyword id="KW-0566">Pantothenate biosynthesis</keyword>
<keyword id="KW-0808">Transferase</keyword>
<protein>
    <recommendedName>
        <fullName evidence="1">3-methyl-2-oxobutanoate hydroxymethyltransferase</fullName>
        <ecNumber evidence="1">2.1.2.11</ecNumber>
    </recommendedName>
    <alternativeName>
        <fullName evidence="1">Ketopantoate hydroxymethyltransferase</fullName>
        <shortName evidence="1">KPHMT</shortName>
    </alternativeName>
</protein>
<reference key="1">
    <citation type="submission" date="2005-07" db="EMBL/GenBank/DDBJ databases">
        <title>Complete sequence of Synechococcus sp. CC9605.</title>
        <authorList>
            <consortium name="US DOE Joint Genome Institute"/>
            <person name="Copeland A."/>
            <person name="Lucas S."/>
            <person name="Lapidus A."/>
            <person name="Barry K."/>
            <person name="Detter J.C."/>
            <person name="Glavina T."/>
            <person name="Hammon N."/>
            <person name="Israni S."/>
            <person name="Pitluck S."/>
            <person name="Schmutz J."/>
            <person name="Martinez M."/>
            <person name="Larimer F."/>
            <person name="Land M."/>
            <person name="Kyrpides N."/>
            <person name="Ivanova N."/>
            <person name="Richardson P."/>
        </authorList>
    </citation>
    <scope>NUCLEOTIDE SEQUENCE [LARGE SCALE GENOMIC DNA]</scope>
    <source>
        <strain>CC9605</strain>
    </source>
</reference>
<evidence type="ECO:0000255" key="1">
    <source>
        <dbReference type="HAMAP-Rule" id="MF_00156"/>
    </source>
</evidence>
<name>PANB_SYNSC</name>
<organism>
    <name type="scientific">Synechococcus sp. (strain CC9605)</name>
    <dbReference type="NCBI Taxonomy" id="110662"/>
    <lineage>
        <taxon>Bacteria</taxon>
        <taxon>Bacillati</taxon>
        <taxon>Cyanobacteriota</taxon>
        <taxon>Cyanophyceae</taxon>
        <taxon>Synechococcales</taxon>
        <taxon>Synechococcaceae</taxon>
        <taxon>Synechococcus</taxon>
    </lineage>
</organism>
<proteinExistence type="inferred from homology"/>
<accession>Q3ALB9</accession>
<gene>
    <name evidence="1" type="primary">panB</name>
    <name type="ordered locus">Syncc9605_0845</name>
</gene>